<organism>
    <name type="scientific">Paracoccus denitrificans (strain Pd 1222)</name>
    <dbReference type="NCBI Taxonomy" id="318586"/>
    <lineage>
        <taxon>Bacteria</taxon>
        <taxon>Pseudomonadati</taxon>
        <taxon>Pseudomonadota</taxon>
        <taxon>Alphaproteobacteria</taxon>
        <taxon>Rhodobacterales</taxon>
        <taxon>Paracoccaceae</taxon>
        <taxon>Paracoccus</taxon>
    </lineage>
</organism>
<feature type="chain" id="PRO_1000016164" description="Aspartyl/glutamyl-tRNA(Asn/Gln) amidotransferase subunit C">
    <location>
        <begin position="1"/>
        <end position="95"/>
    </location>
</feature>
<keyword id="KW-0067">ATP-binding</keyword>
<keyword id="KW-0436">Ligase</keyword>
<keyword id="KW-0547">Nucleotide-binding</keyword>
<keyword id="KW-0648">Protein biosynthesis</keyword>
<keyword id="KW-1185">Reference proteome</keyword>
<dbReference type="EC" id="6.3.5.-" evidence="1"/>
<dbReference type="EMBL" id="CP000489">
    <property type="protein sequence ID" value="ABL68687.1"/>
    <property type="molecule type" value="Genomic_DNA"/>
</dbReference>
<dbReference type="RefSeq" id="WP_011746920.1">
    <property type="nucleotide sequence ID" value="NC_008686.1"/>
</dbReference>
<dbReference type="SMR" id="A1AZJ3"/>
<dbReference type="STRING" id="318586.Pden_0575"/>
<dbReference type="EnsemblBacteria" id="ABL68687">
    <property type="protein sequence ID" value="ABL68687"/>
    <property type="gene ID" value="Pden_0575"/>
</dbReference>
<dbReference type="GeneID" id="93451800"/>
<dbReference type="KEGG" id="pde:Pden_0575"/>
<dbReference type="eggNOG" id="COG0721">
    <property type="taxonomic scope" value="Bacteria"/>
</dbReference>
<dbReference type="HOGENOM" id="CLU_105899_2_0_5"/>
<dbReference type="OrthoDB" id="9794326at2"/>
<dbReference type="Proteomes" id="UP000000361">
    <property type="component" value="Chromosome 1"/>
</dbReference>
<dbReference type="GO" id="GO:0050566">
    <property type="term" value="F:asparaginyl-tRNA synthase (glutamine-hydrolyzing) activity"/>
    <property type="evidence" value="ECO:0007669"/>
    <property type="project" value="RHEA"/>
</dbReference>
<dbReference type="GO" id="GO:0005524">
    <property type="term" value="F:ATP binding"/>
    <property type="evidence" value="ECO:0007669"/>
    <property type="project" value="UniProtKB-KW"/>
</dbReference>
<dbReference type="GO" id="GO:0050567">
    <property type="term" value="F:glutaminyl-tRNA synthase (glutamine-hydrolyzing) activity"/>
    <property type="evidence" value="ECO:0007669"/>
    <property type="project" value="UniProtKB-UniRule"/>
</dbReference>
<dbReference type="GO" id="GO:0070681">
    <property type="term" value="P:glutaminyl-tRNAGln biosynthesis via transamidation"/>
    <property type="evidence" value="ECO:0007669"/>
    <property type="project" value="TreeGrafter"/>
</dbReference>
<dbReference type="GO" id="GO:0006450">
    <property type="term" value="P:regulation of translational fidelity"/>
    <property type="evidence" value="ECO:0007669"/>
    <property type="project" value="InterPro"/>
</dbReference>
<dbReference type="GO" id="GO:0006412">
    <property type="term" value="P:translation"/>
    <property type="evidence" value="ECO:0007669"/>
    <property type="project" value="UniProtKB-UniRule"/>
</dbReference>
<dbReference type="Gene3D" id="1.10.20.60">
    <property type="entry name" value="Glu-tRNAGln amidotransferase C subunit, N-terminal domain"/>
    <property type="match status" value="1"/>
</dbReference>
<dbReference type="HAMAP" id="MF_00122">
    <property type="entry name" value="GatC"/>
    <property type="match status" value="1"/>
</dbReference>
<dbReference type="InterPro" id="IPR036113">
    <property type="entry name" value="Asp/Glu-ADT_sf_sub_c"/>
</dbReference>
<dbReference type="InterPro" id="IPR003837">
    <property type="entry name" value="GatC"/>
</dbReference>
<dbReference type="NCBIfam" id="TIGR00135">
    <property type="entry name" value="gatC"/>
    <property type="match status" value="1"/>
</dbReference>
<dbReference type="PANTHER" id="PTHR15004">
    <property type="entry name" value="GLUTAMYL-TRNA(GLN) AMIDOTRANSFERASE SUBUNIT C, MITOCHONDRIAL"/>
    <property type="match status" value="1"/>
</dbReference>
<dbReference type="PANTHER" id="PTHR15004:SF0">
    <property type="entry name" value="GLUTAMYL-TRNA(GLN) AMIDOTRANSFERASE SUBUNIT C, MITOCHONDRIAL"/>
    <property type="match status" value="1"/>
</dbReference>
<dbReference type="Pfam" id="PF02686">
    <property type="entry name" value="GatC"/>
    <property type="match status" value="1"/>
</dbReference>
<dbReference type="SUPFAM" id="SSF141000">
    <property type="entry name" value="Glu-tRNAGln amidotransferase C subunit"/>
    <property type="match status" value="1"/>
</dbReference>
<proteinExistence type="inferred from homology"/>
<protein>
    <recommendedName>
        <fullName evidence="1">Aspartyl/glutamyl-tRNA(Asn/Gln) amidotransferase subunit C</fullName>
        <shortName evidence="1">Asp/Glu-ADT subunit C</shortName>
        <ecNumber evidence="1">6.3.5.-</ecNumber>
    </recommendedName>
</protein>
<accession>A1AZJ3</accession>
<comment type="function">
    <text evidence="1">Allows the formation of correctly charged Asn-tRNA(Asn) or Gln-tRNA(Gln) through the transamidation of misacylated Asp-tRNA(Asn) or Glu-tRNA(Gln) in organisms which lack either or both of asparaginyl-tRNA or glutaminyl-tRNA synthetases. The reaction takes place in the presence of glutamine and ATP through an activated phospho-Asp-tRNA(Asn) or phospho-Glu-tRNA(Gln).</text>
</comment>
<comment type="catalytic activity">
    <reaction evidence="1">
        <text>L-glutamyl-tRNA(Gln) + L-glutamine + ATP + H2O = L-glutaminyl-tRNA(Gln) + L-glutamate + ADP + phosphate + H(+)</text>
        <dbReference type="Rhea" id="RHEA:17521"/>
        <dbReference type="Rhea" id="RHEA-COMP:9681"/>
        <dbReference type="Rhea" id="RHEA-COMP:9684"/>
        <dbReference type="ChEBI" id="CHEBI:15377"/>
        <dbReference type="ChEBI" id="CHEBI:15378"/>
        <dbReference type="ChEBI" id="CHEBI:29985"/>
        <dbReference type="ChEBI" id="CHEBI:30616"/>
        <dbReference type="ChEBI" id="CHEBI:43474"/>
        <dbReference type="ChEBI" id="CHEBI:58359"/>
        <dbReference type="ChEBI" id="CHEBI:78520"/>
        <dbReference type="ChEBI" id="CHEBI:78521"/>
        <dbReference type="ChEBI" id="CHEBI:456216"/>
    </reaction>
</comment>
<comment type="catalytic activity">
    <reaction evidence="1">
        <text>L-aspartyl-tRNA(Asn) + L-glutamine + ATP + H2O = L-asparaginyl-tRNA(Asn) + L-glutamate + ADP + phosphate + 2 H(+)</text>
        <dbReference type="Rhea" id="RHEA:14513"/>
        <dbReference type="Rhea" id="RHEA-COMP:9674"/>
        <dbReference type="Rhea" id="RHEA-COMP:9677"/>
        <dbReference type="ChEBI" id="CHEBI:15377"/>
        <dbReference type="ChEBI" id="CHEBI:15378"/>
        <dbReference type="ChEBI" id="CHEBI:29985"/>
        <dbReference type="ChEBI" id="CHEBI:30616"/>
        <dbReference type="ChEBI" id="CHEBI:43474"/>
        <dbReference type="ChEBI" id="CHEBI:58359"/>
        <dbReference type="ChEBI" id="CHEBI:78515"/>
        <dbReference type="ChEBI" id="CHEBI:78516"/>
        <dbReference type="ChEBI" id="CHEBI:456216"/>
    </reaction>
</comment>
<comment type="subunit">
    <text evidence="1">Heterotrimer of A, B and C subunits.</text>
</comment>
<comment type="similarity">
    <text evidence="1">Belongs to the GatC family.</text>
</comment>
<reference key="1">
    <citation type="submission" date="2006-12" db="EMBL/GenBank/DDBJ databases">
        <title>Complete sequence of chromosome 1 of Paracoccus denitrificans PD1222.</title>
        <authorList>
            <person name="Copeland A."/>
            <person name="Lucas S."/>
            <person name="Lapidus A."/>
            <person name="Barry K."/>
            <person name="Detter J.C."/>
            <person name="Glavina del Rio T."/>
            <person name="Hammon N."/>
            <person name="Israni S."/>
            <person name="Dalin E."/>
            <person name="Tice H."/>
            <person name="Pitluck S."/>
            <person name="Munk A.C."/>
            <person name="Brettin T."/>
            <person name="Bruce D."/>
            <person name="Han C."/>
            <person name="Tapia R."/>
            <person name="Gilna P."/>
            <person name="Schmutz J."/>
            <person name="Larimer F."/>
            <person name="Land M."/>
            <person name="Hauser L."/>
            <person name="Kyrpides N."/>
            <person name="Lykidis A."/>
            <person name="Spiro S."/>
            <person name="Richardson D.J."/>
            <person name="Moir J.W.B."/>
            <person name="Ferguson S.J."/>
            <person name="van Spanning R.J.M."/>
            <person name="Richardson P."/>
        </authorList>
    </citation>
    <scope>NUCLEOTIDE SEQUENCE [LARGE SCALE GENOMIC DNA]</scope>
    <source>
        <strain>Pd 1222</strain>
    </source>
</reference>
<sequence>MAITEDEARKVAHLARIAVKDADLPALAQELNGILHFMEQLNEVDVEGVQPMTGVEPMRLKRRQDIVTDGEMQDLILKNAPDAREGFFAVPKVVE</sequence>
<name>GATC_PARDP</name>
<gene>
    <name evidence="1" type="primary">gatC</name>
    <name type="ordered locus">Pden_0575</name>
</gene>
<evidence type="ECO:0000255" key="1">
    <source>
        <dbReference type="HAMAP-Rule" id="MF_00122"/>
    </source>
</evidence>